<comment type="subcellular location">
    <subcellularLocation>
        <location>Mitochondrion</location>
    </subcellularLocation>
</comment>
<comment type="RNA editing" locationType="Undetermined">
    <text evidence="1">A premature stop codon is created by RNA editing and appears to render this gene nonfunctional.</text>
</comment>
<comment type="similarity">
    <text evidence="2">Belongs to the universal ribosomal protein uL16 family.</text>
</comment>
<dbReference type="EMBL" id="X67028">
    <property type="protein sequence ID" value="CAA47422.1"/>
    <property type="molecule type" value="Genomic_DNA"/>
</dbReference>
<dbReference type="PIR" id="S32194">
    <property type="entry name" value="S32194"/>
</dbReference>
<dbReference type="SMR" id="Q04715"/>
<dbReference type="GO" id="GO:0005762">
    <property type="term" value="C:mitochondrial large ribosomal subunit"/>
    <property type="evidence" value="ECO:0007669"/>
    <property type="project" value="TreeGrafter"/>
</dbReference>
<dbReference type="GO" id="GO:0019843">
    <property type="term" value="F:rRNA binding"/>
    <property type="evidence" value="ECO:0007669"/>
    <property type="project" value="InterPro"/>
</dbReference>
<dbReference type="GO" id="GO:0003735">
    <property type="term" value="F:structural constituent of ribosome"/>
    <property type="evidence" value="ECO:0007669"/>
    <property type="project" value="InterPro"/>
</dbReference>
<dbReference type="GO" id="GO:0032543">
    <property type="term" value="P:mitochondrial translation"/>
    <property type="evidence" value="ECO:0007669"/>
    <property type="project" value="TreeGrafter"/>
</dbReference>
<dbReference type="CDD" id="cd01433">
    <property type="entry name" value="Ribosomal_L16_L10e"/>
    <property type="match status" value="1"/>
</dbReference>
<dbReference type="Gene3D" id="3.90.1170.10">
    <property type="entry name" value="Ribosomal protein L10e/L16"/>
    <property type="match status" value="1"/>
</dbReference>
<dbReference type="InterPro" id="IPR047873">
    <property type="entry name" value="Ribosomal_uL16"/>
</dbReference>
<dbReference type="InterPro" id="IPR000114">
    <property type="entry name" value="Ribosomal_uL16_bact-type"/>
</dbReference>
<dbReference type="InterPro" id="IPR020798">
    <property type="entry name" value="Ribosomal_uL16_CS"/>
</dbReference>
<dbReference type="InterPro" id="IPR016180">
    <property type="entry name" value="Ribosomal_uL16_dom"/>
</dbReference>
<dbReference type="InterPro" id="IPR036920">
    <property type="entry name" value="Ribosomal_uL16_sf"/>
</dbReference>
<dbReference type="NCBIfam" id="TIGR01164">
    <property type="entry name" value="rplP_bact"/>
    <property type="match status" value="1"/>
</dbReference>
<dbReference type="PANTHER" id="PTHR12220">
    <property type="entry name" value="50S/60S RIBOSOMAL PROTEIN L16"/>
    <property type="match status" value="1"/>
</dbReference>
<dbReference type="PANTHER" id="PTHR12220:SF24">
    <property type="entry name" value="LARGE RIBOSOMAL SUBUNIT PROTEIN UL16M"/>
    <property type="match status" value="1"/>
</dbReference>
<dbReference type="Pfam" id="PF00252">
    <property type="entry name" value="Ribosomal_L16"/>
    <property type="match status" value="1"/>
</dbReference>
<dbReference type="PRINTS" id="PR00060">
    <property type="entry name" value="RIBOSOMALL16"/>
</dbReference>
<dbReference type="SUPFAM" id="SSF54686">
    <property type="entry name" value="Ribosomal protein L16p/L10e"/>
    <property type="match status" value="1"/>
</dbReference>
<dbReference type="PROSITE" id="PS00586">
    <property type="entry name" value="RIBOSOMAL_L16_1"/>
    <property type="match status" value="1"/>
</dbReference>
<dbReference type="PROSITE" id="PS00701">
    <property type="entry name" value="RIBOSOMAL_L16_2"/>
    <property type="match status" value="1"/>
</dbReference>
<keyword id="KW-0496">Mitochondrion</keyword>
<keyword id="KW-0687">Ribonucleoprotein</keyword>
<keyword id="KW-0689">Ribosomal protein</keyword>
<keyword id="KW-0691">RNA editing</keyword>
<feature type="chain" id="PRO_0000062327" description="Large ribosomal subunit protein uL16m">
    <location>
        <begin position="1"/>
        <end position="155"/>
    </location>
</feature>
<accession>Q04715</accession>
<proteinExistence type="evidence at transcript level"/>
<reference key="1">
    <citation type="journal article" date="1993" name="Curr. Genet.">
        <title>Editing of rps3/rpl16 transcripts creates a premature truncation of the rpl16 open reading frame.</title>
        <authorList>
            <person name="Sutton C.A."/>
            <person name="Conklin P.L."/>
            <person name="Pruitt K.D."/>
            <person name="Calfee A.J."/>
            <person name="Cobb A.G."/>
            <person name="Hanson M.R."/>
        </authorList>
    </citation>
    <scope>NUCLEOTIDE SEQUENCE [GENOMIC DNA]</scope>
    <scope>RNA EDITING</scope>
</reference>
<organism>
    <name type="scientific">Petunia hybrida</name>
    <name type="common">Petunia</name>
    <dbReference type="NCBI Taxonomy" id="4102"/>
    <lineage>
        <taxon>Eukaryota</taxon>
        <taxon>Viridiplantae</taxon>
        <taxon>Streptophyta</taxon>
        <taxon>Embryophyta</taxon>
        <taxon>Tracheophyta</taxon>
        <taxon>Spermatophyta</taxon>
        <taxon>Magnoliopsida</taxon>
        <taxon>eudicotyledons</taxon>
        <taxon>Gunneridae</taxon>
        <taxon>Pentapetalae</taxon>
        <taxon>asterids</taxon>
        <taxon>lamiids</taxon>
        <taxon>Solanales</taxon>
        <taxon>Solanaceae</taxon>
        <taxon>Petunioideae</taxon>
        <taxon>Petunia</taxon>
    </lineage>
</organism>
<name>RM16_PETHY</name>
<sequence length="155" mass="17559">MLLRKYLLVTESQVSKCGFLIVKKKRDVLYPKRTKYSKYRKGRCSRGCKPDGTQLGFGRYGTKSCRAGRLSYRAIEAARRAIIGHFHRAMSGQFRRNGKIWVRVLADIPITGKPTEVRMGRGKGNPTGWIARVSRGQILFEMDGVSLSNARQALH</sequence>
<protein>
    <recommendedName>
        <fullName evidence="2">Large ribosomal subunit protein uL16m</fullName>
    </recommendedName>
    <alternativeName>
        <fullName>60S ribosomal protein L16, mitochondrial</fullName>
    </alternativeName>
</protein>
<geneLocation type="mitochondrion"/>
<gene>
    <name type="primary">RPL16</name>
</gene>
<evidence type="ECO:0000269" key="1">
    <source>
    </source>
</evidence>
<evidence type="ECO:0000305" key="2"/>